<comment type="function">
    <text evidence="1">Catalyzes the attachment of valine to tRNA(Val). As ValRS can inadvertently accommodate and process structurally similar amino acids such as threonine, to avoid such errors, it has a 'posttransfer' editing activity that hydrolyzes mischarged Thr-tRNA(Val) in a tRNA-dependent manner.</text>
</comment>
<comment type="catalytic activity">
    <reaction evidence="1">
        <text>tRNA(Val) + L-valine + ATP = L-valyl-tRNA(Val) + AMP + diphosphate</text>
        <dbReference type="Rhea" id="RHEA:10704"/>
        <dbReference type="Rhea" id="RHEA-COMP:9672"/>
        <dbReference type="Rhea" id="RHEA-COMP:9708"/>
        <dbReference type="ChEBI" id="CHEBI:30616"/>
        <dbReference type="ChEBI" id="CHEBI:33019"/>
        <dbReference type="ChEBI" id="CHEBI:57762"/>
        <dbReference type="ChEBI" id="CHEBI:78442"/>
        <dbReference type="ChEBI" id="CHEBI:78537"/>
        <dbReference type="ChEBI" id="CHEBI:456215"/>
        <dbReference type="EC" id="6.1.1.9"/>
    </reaction>
</comment>
<comment type="subunit">
    <text evidence="1">Monomer.</text>
</comment>
<comment type="subcellular location">
    <subcellularLocation>
        <location evidence="1">Cytoplasm</location>
    </subcellularLocation>
</comment>
<comment type="domain">
    <text evidence="1">ValRS has two distinct active sites: one for aminoacylation and one for editing. The misactivated threonine is translocated from the active site to the editing site.</text>
</comment>
<comment type="domain">
    <text evidence="1">The C-terminal coiled-coil domain is crucial for aminoacylation activity.</text>
</comment>
<comment type="similarity">
    <text evidence="1">Belongs to the class-I aminoacyl-tRNA synthetase family. ValS type 1 subfamily.</text>
</comment>
<organism>
    <name type="scientific">Carboxydothermus hydrogenoformans (strain ATCC BAA-161 / DSM 6008 / Z-2901)</name>
    <dbReference type="NCBI Taxonomy" id="246194"/>
    <lineage>
        <taxon>Bacteria</taxon>
        <taxon>Bacillati</taxon>
        <taxon>Bacillota</taxon>
        <taxon>Clostridia</taxon>
        <taxon>Thermoanaerobacterales</taxon>
        <taxon>Thermoanaerobacteraceae</taxon>
        <taxon>Carboxydothermus</taxon>
    </lineage>
</organism>
<evidence type="ECO:0000255" key="1">
    <source>
        <dbReference type="HAMAP-Rule" id="MF_02004"/>
    </source>
</evidence>
<reference key="1">
    <citation type="journal article" date="2005" name="PLoS Genet.">
        <title>Life in hot carbon monoxide: the complete genome sequence of Carboxydothermus hydrogenoformans Z-2901.</title>
        <authorList>
            <person name="Wu M."/>
            <person name="Ren Q."/>
            <person name="Durkin A.S."/>
            <person name="Daugherty S.C."/>
            <person name="Brinkac L.M."/>
            <person name="Dodson R.J."/>
            <person name="Madupu R."/>
            <person name="Sullivan S.A."/>
            <person name="Kolonay J.F."/>
            <person name="Nelson W.C."/>
            <person name="Tallon L.J."/>
            <person name="Jones K.M."/>
            <person name="Ulrich L.E."/>
            <person name="Gonzalez J.M."/>
            <person name="Zhulin I.B."/>
            <person name="Robb F.T."/>
            <person name="Eisen J.A."/>
        </authorList>
    </citation>
    <scope>NUCLEOTIDE SEQUENCE [LARGE SCALE GENOMIC DNA]</scope>
    <source>
        <strain>ATCC BAA-161 / DSM 6008 / Z-2901</strain>
    </source>
</reference>
<protein>
    <recommendedName>
        <fullName evidence="1">Valine--tRNA ligase</fullName>
        <ecNumber evidence="1">6.1.1.9</ecNumber>
    </recommendedName>
    <alternativeName>
        <fullName evidence="1">Valyl-tRNA synthetase</fullName>
        <shortName evidence="1">ValRS</shortName>
    </alternativeName>
</protein>
<feature type="chain" id="PRO_0000224455" description="Valine--tRNA ligase">
    <location>
        <begin position="1"/>
        <end position="878"/>
    </location>
</feature>
<feature type="coiled-coil region" evidence="1">
    <location>
        <begin position="804"/>
        <end position="871"/>
    </location>
</feature>
<feature type="short sequence motif" description="'HIGH' region">
    <location>
        <begin position="45"/>
        <end position="55"/>
    </location>
</feature>
<feature type="short sequence motif" description="'KMSKS' region">
    <location>
        <begin position="524"/>
        <end position="528"/>
    </location>
</feature>
<feature type="binding site" evidence="1">
    <location>
        <position position="527"/>
    </location>
    <ligand>
        <name>ATP</name>
        <dbReference type="ChEBI" id="CHEBI:30616"/>
    </ligand>
</feature>
<accession>Q3AF87</accession>
<name>SYV_CARHZ</name>
<sequence length="878" mass="101510">MTVTLPSVYSPQEVERKWYKYWEENGFFHTEPDEREPFCIVMPPPNVTGQLHMGHALDNTMQDILARYKRMQGFNTLWLPGTDHAGIATQAKVEEELRKEGLTKDDLGREKFLERVWAWKENYGNRITEQLRTLGASCDWKRERFTLDEGCSEAVKEVFLRLYEKGLIYRDYYITNWCPHCKTTISDIEVEHLEREGKLYYINYPLEDGSGYLTVATTRPETMLGDTAVAVHPEDERYRELIGKNVILPLVNRPIPVIADEYVDKEFGTGAVKITPAHDPNDFEVGLRHKLPQVVVLDDDAVMNENAGKYRGLDRYEARKKIVEDLKDLGLLVKEEEITHSVGHCYRCDTVIEPRLSKQWFVKMKPLAEPAIEAALTGKVKFVPERFTKIYLNWLYNIRDWCISRQLWWGHRIPVWYCDECGEVIPSREEVKSCPKCQSTKVHQDPDVLDTWFSSALWPFSTLGWPQNTEELKYYYPTSVLVTGRDIIFFWVARMLFMGLEFMKEVPFKEVLIHGLVLDAQGRKMSKSLGNGVDPVEVIASHGADSLRFMLVTGNTPGNDLRFHFERLDGARNFANKLWNASRFVLMNLEGFTPQGIKQEELTLADRWILARLNAVIDRVTAFLDEYELGEAARELYEFIWDEFCDWYVELTKPRLYGKMPGGDTAREVLYAVLKTTLELLHPFMPFITEEIWQRLPHEGKTIMLAPWPKGRADYENPEAVKQMSSLMEVIREIRRLRAEVNVPPAKRGEVILVTADEQLTRLLNENAWAIAALAQSEPRVVPKMEVPQGALTGVAAGVTIYLPLKDLIDLEKEKERLNKELKKVLAEIERLNQKLNNPGFLAKAPAEVVNKEREKLTAFYREKEVLEQRIGMLSHEL</sequence>
<dbReference type="EC" id="6.1.1.9" evidence="1"/>
<dbReference type="EMBL" id="CP000141">
    <property type="protein sequence ID" value="ABB15424.1"/>
    <property type="molecule type" value="Genomic_DNA"/>
</dbReference>
<dbReference type="RefSeq" id="WP_011343273.1">
    <property type="nucleotide sequence ID" value="NC_007503.1"/>
</dbReference>
<dbReference type="SMR" id="Q3AF87"/>
<dbReference type="FunCoup" id="Q3AF87">
    <property type="interactions" value="438"/>
</dbReference>
<dbReference type="STRING" id="246194.CHY_0334"/>
<dbReference type="KEGG" id="chy:CHY_0334"/>
<dbReference type="eggNOG" id="COG0525">
    <property type="taxonomic scope" value="Bacteria"/>
</dbReference>
<dbReference type="HOGENOM" id="CLU_001493_0_2_9"/>
<dbReference type="InParanoid" id="Q3AF87"/>
<dbReference type="OrthoDB" id="9810365at2"/>
<dbReference type="Proteomes" id="UP000002706">
    <property type="component" value="Chromosome"/>
</dbReference>
<dbReference type="GO" id="GO:0005829">
    <property type="term" value="C:cytosol"/>
    <property type="evidence" value="ECO:0007669"/>
    <property type="project" value="TreeGrafter"/>
</dbReference>
<dbReference type="GO" id="GO:0002161">
    <property type="term" value="F:aminoacyl-tRNA deacylase activity"/>
    <property type="evidence" value="ECO:0007669"/>
    <property type="project" value="InterPro"/>
</dbReference>
<dbReference type="GO" id="GO:0005524">
    <property type="term" value="F:ATP binding"/>
    <property type="evidence" value="ECO:0007669"/>
    <property type="project" value="UniProtKB-UniRule"/>
</dbReference>
<dbReference type="GO" id="GO:0004832">
    <property type="term" value="F:valine-tRNA ligase activity"/>
    <property type="evidence" value="ECO:0007669"/>
    <property type="project" value="UniProtKB-UniRule"/>
</dbReference>
<dbReference type="GO" id="GO:0006438">
    <property type="term" value="P:valyl-tRNA aminoacylation"/>
    <property type="evidence" value="ECO:0007669"/>
    <property type="project" value="UniProtKB-UniRule"/>
</dbReference>
<dbReference type="CDD" id="cd07962">
    <property type="entry name" value="Anticodon_Ia_Val"/>
    <property type="match status" value="1"/>
</dbReference>
<dbReference type="CDD" id="cd00817">
    <property type="entry name" value="ValRS_core"/>
    <property type="match status" value="1"/>
</dbReference>
<dbReference type="FunFam" id="1.10.287.380:FF:000001">
    <property type="entry name" value="Valine--tRNA ligase"/>
    <property type="match status" value="1"/>
</dbReference>
<dbReference type="FunFam" id="1.10.730.10:FF:000014">
    <property type="entry name" value="Valine--tRNA ligase"/>
    <property type="match status" value="1"/>
</dbReference>
<dbReference type="FunFam" id="3.40.50.620:FF:000032">
    <property type="entry name" value="Valine--tRNA ligase"/>
    <property type="match status" value="1"/>
</dbReference>
<dbReference type="FunFam" id="3.40.50.620:FF:000098">
    <property type="entry name" value="Valine--tRNA ligase"/>
    <property type="match status" value="1"/>
</dbReference>
<dbReference type="FunFam" id="3.90.740.10:FF:000005">
    <property type="entry name" value="Valine--tRNA ligase, mitochondrial"/>
    <property type="match status" value="1"/>
</dbReference>
<dbReference type="Gene3D" id="3.40.50.620">
    <property type="entry name" value="HUPs"/>
    <property type="match status" value="2"/>
</dbReference>
<dbReference type="Gene3D" id="1.10.730.10">
    <property type="entry name" value="Isoleucyl-tRNA Synthetase, Domain 1"/>
    <property type="match status" value="1"/>
</dbReference>
<dbReference type="Gene3D" id="1.10.287.380">
    <property type="entry name" value="Valyl-tRNA synthetase, C-terminal domain"/>
    <property type="match status" value="1"/>
</dbReference>
<dbReference type="Gene3D" id="3.90.740.10">
    <property type="entry name" value="Valyl/Leucyl/Isoleucyl-tRNA synthetase, editing domain"/>
    <property type="match status" value="1"/>
</dbReference>
<dbReference type="HAMAP" id="MF_02004">
    <property type="entry name" value="Val_tRNA_synth_type1"/>
    <property type="match status" value="1"/>
</dbReference>
<dbReference type="InterPro" id="IPR001412">
    <property type="entry name" value="aa-tRNA-synth_I_CS"/>
</dbReference>
<dbReference type="InterPro" id="IPR002300">
    <property type="entry name" value="aa-tRNA-synth_Ia"/>
</dbReference>
<dbReference type="InterPro" id="IPR033705">
    <property type="entry name" value="Anticodon_Ia_Val"/>
</dbReference>
<dbReference type="InterPro" id="IPR013155">
    <property type="entry name" value="M/V/L/I-tRNA-synth_anticd-bd"/>
</dbReference>
<dbReference type="InterPro" id="IPR014729">
    <property type="entry name" value="Rossmann-like_a/b/a_fold"/>
</dbReference>
<dbReference type="InterPro" id="IPR010978">
    <property type="entry name" value="tRNA-bd_arm"/>
</dbReference>
<dbReference type="InterPro" id="IPR009080">
    <property type="entry name" value="tRNAsynth_Ia_anticodon-bd"/>
</dbReference>
<dbReference type="InterPro" id="IPR037118">
    <property type="entry name" value="Val-tRNA_synth_C_sf"/>
</dbReference>
<dbReference type="InterPro" id="IPR019499">
    <property type="entry name" value="Val-tRNA_synth_tRNA-bd"/>
</dbReference>
<dbReference type="InterPro" id="IPR009008">
    <property type="entry name" value="Val/Leu/Ile-tRNA-synth_edit"/>
</dbReference>
<dbReference type="InterPro" id="IPR002303">
    <property type="entry name" value="Valyl-tRNA_ligase"/>
</dbReference>
<dbReference type="NCBIfam" id="NF004349">
    <property type="entry name" value="PRK05729.1"/>
    <property type="match status" value="1"/>
</dbReference>
<dbReference type="NCBIfam" id="TIGR00422">
    <property type="entry name" value="valS"/>
    <property type="match status" value="1"/>
</dbReference>
<dbReference type="PANTHER" id="PTHR11946:SF93">
    <property type="entry name" value="VALINE--TRNA LIGASE, CHLOROPLASTIC_MITOCHONDRIAL 2"/>
    <property type="match status" value="1"/>
</dbReference>
<dbReference type="PANTHER" id="PTHR11946">
    <property type="entry name" value="VALYL-TRNA SYNTHETASES"/>
    <property type="match status" value="1"/>
</dbReference>
<dbReference type="Pfam" id="PF08264">
    <property type="entry name" value="Anticodon_1"/>
    <property type="match status" value="1"/>
</dbReference>
<dbReference type="Pfam" id="PF00133">
    <property type="entry name" value="tRNA-synt_1"/>
    <property type="match status" value="1"/>
</dbReference>
<dbReference type="Pfam" id="PF10458">
    <property type="entry name" value="Val_tRNA-synt_C"/>
    <property type="match status" value="1"/>
</dbReference>
<dbReference type="PRINTS" id="PR00986">
    <property type="entry name" value="TRNASYNTHVAL"/>
</dbReference>
<dbReference type="SUPFAM" id="SSF47323">
    <property type="entry name" value="Anticodon-binding domain of a subclass of class I aminoacyl-tRNA synthetases"/>
    <property type="match status" value="1"/>
</dbReference>
<dbReference type="SUPFAM" id="SSF52374">
    <property type="entry name" value="Nucleotidylyl transferase"/>
    <property type="match status" value="1"/>
</dbReference>
<dbReference type="SUPFAM" id="SSF46589">
    <property type="entry name" value="tRNA-binding arm"/>
    <property type="match status" value="1"/>
</dbReference>
<dbReference type="SUPFAM" id="SSF50677">
    <property type="entry name" value="ValRS/IleRS/LeuRS editing domain"/>
    <property type="match status" value="1"/>
</dbReference>
<dbReference type="PROSITE" id="PS00178">
    <property type="entry name" value="AA_TRNA_LIGASE_I"/>
    <property type="match status" value="1"/>
</dbReference>
<gene>
    <name evidence="1" type="primary">valS</name>
    <name type="ordered locus">CHY_0334</name>
</gene>
<keyword id="KW-0030">Aminoacyl-tRNA synthetase</keyword>
<keyword id="KW-0067">ATP-binding</keyword>
<keyword id="KW-0175">Coiled coil</keyword>
<keyword id="KW-0963">Cytoplasm</keyword>
<keyword id="KW-0436">Ligase</keyword>
<keyword id="KW-0547">Nucleotide-binding</keyword>
<keyword id="KW-0648">Protein biosynthesis</keyword>
<keyword id="KW-1185">Reference proteome</keyword>
<proteinExistence type="inferred from homology"/>